<sequence>MSSDAVDETHENARQEVIAVDADDNEEGLVNRLDAHTGDGVRHRAFTALLFDENDRILLAQRAANKRLWDTHWDGTVASHPVEGQTQVEATEERLEEELGVDPSQYQNLRVTDRFEYKRYYENAGLEWEVCAVLQATLHDTSLEPNPEEVDGLMWVPYERLREHPEYYRQLRLCPWFEIAMRRDEER</sequence>
<name>IDI_HALMA</name>
<protein>
    <recommendedName>
        <fullName evidence="1">Isopentenyl-diphosphate Delta-isomerase</fullName>
        <shortName evidence="1">IPP isomerase</shortName>
        <ecNumber evidence="1">5.3.3.2</ecNumber>
    </recommendedName>
    <alternativeName>
        <fullName evidence="1">IPP:DMAPP isomerase</fullName>
    </alternativeName>
    <alternativeName>
        <fullName evidence="1">Isopentenyl pyrophosphate isomerase</fullName>
    </alternativeName>
</protein>
<feature type="chain" id="PRO_0000205271" description="Isopentenyl-diphosphate Delta-isomerase">
    <location>
        <begin position="1"/>
        <end position="187"/>
    </location>
</feature>
<feature type="domain" description="Nudix hydrolase">
    <location>
        <begin position="41"/>
        <end position="178"/>
    </location>
</feature>
<feature type="active site" evidence="1">
    <location>
        <position position="129"/>
    </location>
</feature>
<feature type="binding site" evidence="1">
    <location>
        <position position="36"/>
    </location>
    <ligand>
        <name>Mn(2+)</name>
        <dbReference type="ChEBI" id="CHEBI:29035"/>
    </ligand>
</feature>
<feature type="binding site" evidence="1">
    <location>
        <position position="43"/>
    </location>
    <ligand>
        <name>Mn(2+)</name>
        <dbReference type="ChEBI" id="CHEBI:29035"/>
    </ligand>
</feature>
<feature type="binding site" evidence="1">
    <location>
        <position position="80"/>
    </location>
    <ligand>
        <name>Mn(2+)</name>
        <dbReference type="ChEBI" id="CHEBI:29035"/>
    </ligand>
</feature>
<feature type="binding site" evidence="1">
    <location>
        <position position="98"/>
    </location>
    <ligand>
        <name>Mg(2+)</name>
        <dbReference type="ChEBI" id="CHEBI:18420"/>
    </ligand>
</feature>
<feature type="binding site" evidence="1">
    <location>
        <position position="127"/>
    </location>
    <ligand>
        <name>Mn(2+)</name>
        <dbReference type="ChEBI" id="CHEBI:29035"/>
    </ligand>
</feature>
<feature type="binding site" evidence="1">
    <location>
        <position position="129"/>
    </location>
    <ligand>
        <name>Mn(2+)</name>
        <dbReference type="ChEBI" id="CHEBI:29035"/>
    </ligand>
</feature>
<evidence type="ECO:0000255" key="1">
    <source>
        <dbReference type="HAMAP-Rule" id="MF_00202"/>
    </source>
</evidence>
<evidence type="ECO:0000305" key="2"/>
<dbReference type="EC" id="5.3.3.2" evidence="1"/>
<dbReference type="EMBL" id="AY596297">
    <property type="protein sequence ID" value="AAV48158.1"/>
    <property type="molecule type" value="Genomic_DNA"/>
</dbReference>
<dbReference type="RefSeq" id="WP_011224828.1">
    <property type="nucleotide sequence ID" value="NC_006396.1"/>
</dbReference>
<dbReference type="SMR" id="Q5UX45"/>
<dbReference type="STRING" id="272569.rrnAC3484"/>
<dbReference type="PaxDb" id="272569-rrnAC3484"/>
<dbReference type="EnsemblBacteria" id="AAV48158">
    <property type="protein sequence ID" value="AAV48158"/>
    <property type="gene ID" value="rrnAC3484"/>
</dbReference>
<dbReference type="GeneID" id="40154262"/>
<dbReference type="KEGG" id="hma:rrnAC3484"/>
<dbReference type="PATRIC" id="fig|272569.17.peg.3995"/>
<dbReference type="eggNOG" id="arCOG01081">
    <property type="taxonomic scope" value="Archaea"/>
</dbReference>
<dbReference type="HOGENOM" id="CLU_060552_2_1_2"/>
<dbReference type="UniPathway" id="UPA00059">
    <property type="reaction ID" value="UER00104"/>
</dbReference>
<dbReference type="Proteomes" id="UP000001169">
    <property type="component" value="Chromosome I"/>
</dbReference>
<dbReference type="GO" id="GO:0005737">
    <property type="term" value="C:cytoplasm"/>
    <property type="evidence" value="ECO:0007669"/>
    <property type="project" value="UniProtKB-SubCell"/>
</dbReference>
<dbReference type="GO" id="GO:0004452">
    <property type="term" value="F:isopentenyl-diphosphate delta-isomerase activity"/>
    <property type="evidence" value="ECO:0007669"/>
    <property type="project" value="UniProtKB-UniRule"/>
</dbReference>
<dbReference type="GO" id="GO:0046872">
    <property type="term" value="F:metal ion binding"/>
    <property type="evidence" value="ECO:0007669"/>
    <property type="project" value="UniProtKB-KW"/>
</dbReference>
<dbReference type="GO" id="GO:0050992">
    <property type="term" value="P:dimethylallyl diphosphate biosynthetic process"/>
    <property type="evidence" value="ECO:0007669"/>
    <property type="project" value="UniProtKB-UniRule"/>
</dbReference>
<dbReference type="GO" id="GO:0009240">
    <property type="term" value="P:isopentenyl diphosphate biosynthetic process"/>
    <property type="evidence" value="ECO:0007669"/>
    <property type="project" value="TreeGrafter"/>
</dbReference>
<dbReference type="CDD" id="cd02885">
    <property type="entry name" value="NUDIX_IPP_Isomerase"/>
    <property type="match status" value="1"/>
</dbReference>
<dbReference type="Gene3D" id="3.90.79.10">
    <property type="entry name" value="Nucleoside Triphosphate Pyrophosphohydrolase"/>
    <property type="match status" value="1"/>
</dbReference>
<dbReference type="HAMAP" id="MF_00202">
    <property type="entry name" value="Idi"/>
    <property type="match status" value="1"/>
</dbReference>
<dbReference type="InterPro" id="IPR056375">
    <property type="entry name" value="Idi_bact"/>
</dbReference>
<dbReference type="InterPro" id="IPR011876">
    <property type="entry name" value="IsopentenylPP_isomerase_typ1"/>
</dbReference>
<dbReference type="InterPro" id="IPR015797">
    <property type="entry name" value="NUDIX_hydrolase-like_dom_sf"/>
</dbReference>
<dbReference type="InterPro" id="IPR000086">
    <property type="entry name" value="NUDIX_hydrolase_dom"/>
</dbReference>
<dbReference type="PANTHER" id="PTHR10885">
    <property type="entry name" value="ISOPENTENYL-DIPHOSPHATE DELTA-ISOMERASE"/>
    <property type="match status" value="1"/>
</dbReference>
<dbReference type="PANTHER" id="PTHR10885:SF0">
    <property type="entry name" value="ISOPENTENYL-DIPHOSPHATE DELTA-ISOMERASE"/>
    <property type="match status" value="1"/>
</dbReference>
<dbReference type="Pfam" id="PF00293">
    <property type="entry name" value="NUDIX"/>
    <property type="match status" value="1"/>
</dbReference>
<dbReference type="PIRSF" id="PIRSF018427">
    <property type="entry name" value="Isopntndiph_ism"/>
    <property type="match status" value="1"/>
</dbReference>
<dbReference type="SUPFAM" id="SSF55811">
    <property type="entry name" value="Nudix"/>
    <property type="match status" value="1"/>
</dbReference>
<dbReference type="PROSITE" id="PS51462">
    <property type="entry name" value="NUDIX"/>
    <property type="match status" value="1"/>
</dbReference>
<organism>
    <name type="scientific">Haloarcula marismortui (strain ATCC 43049 / DSM 3752 / JCM 8966 / VKM B-1809)</name>
    <name type="common">Halobacterium marismortui</name>
    <dbReference type="NCBI Taxonomy" id="272569"/>
    <lineage>
        <taxon>Archaea</taxon>
        <taxon>Methanobacteriati</taxon>
        <taxon>Methanobacteriota</taxon>
        <taxon>Stenosarchaea group</taxon>
        <taxon>Halobacteria</taxon>
        <taxon>Halobacteriales</taxon>
        <taxon>Haloarculaceae</taxon>
        <taxon>Haloarcula</taxon>
    </lineage>
</organism>
<gene>
    <name evidence="1" type="primary">idi</name>
    <name type="ordered locus">rrnAC3484</name>
</gene>
<reference key="1">
    <citation type="journal article" date="2004" name="Genome Res.">
        <title>Genome sequence of Haloarcula marismortui: a halophilic archaeon from the Dead Sea.</title>
        <authorList>
            <person name="Baliga N.S."/>
            <person name="Bonneau R."/>
            <person name="Facciotti M.T."/>
            <person name="Pan M."/>
            <person name="Glusman G."/>
            <person name="Deutsch E.W."/>
            <person name="Shannon P."/>
            <person name="Chiu Y."/>
            <person name="Weng R.S."/>
            <person name="Gan R.R."/>
            <person name="Hung P."/>
            <person name="Date S.V."/>
            <person name="Marcotte E."/>
            <person name="Hood L."/>
            <person name="Ng W.V."/>
        </authorList>
    </citation>
    <scope>NUCLEOTIDE SEQUENCE [LARGE SCALE GENOMIC DNA]</scope>
    <source>
        <strain>ATCC 43049 / DSM 3752 / JCM 8966 / VKM B-1809</strain>
    </source>
</reference>
<proteinExistence type="inferred from homology"/>
<keyword id="KW-0963">Cytoplasm</keyword>
<keyword id="KW-0413">Isomerase</keyword>
<keyword id="KW-0414">Isoprene biosynthesis</keyword>
<keyword id="KW-0460">Magnesium</keyword>
<keyword id="KW-0464">Manganese</keyword>
<keyword id="KW-0479">Metal-binding</keyword>
<keyword id="KW-1185">Reference proteome</keyword>
<comment type="function">
    <text evidence="1">Catalyzes the 1,3-allylic rearrangement of the homoallylic substrate isopentenyl (IPP) to its highly electrophilic allylic isomer, dimethylallyl diphosphate (DMAPP).</text>
</comment>
<comment type="catalytic activity">
    <reaction evidence="1">
        <text>isopentenyl diphosphate = dimethylallyl diphosphate</text>
        <dbReference type="Rhea" id="RHEA:23284"/>
        <dbReference type="ChEBI" id="CHEBI:57623"/>
        <dbReference type="ChEBI" id="CHEBI:128769"/>
        <dbReference type="EC" id="5.3.3.2"/>
    </reaction>
</comment>
<comment type="cofactor">
    <cofactor evidence="1">
        <name>Mg(2+)</name>
        <dbReference type="ChEBI" id="CHEBI:18420"/>
    </cofactor>
    <text evidence="1">Binds 1 Mg(2+) ion per subunit. The magnesium ion binds only when substrate is bound.</text>
</comment>
<comment type="cofactor">
    <cofactor evidence="1">
        <name>Mn(2+)</name>
        <dbReference type="ChEBI" id="CHEBI:29035"/>
    </cofactor>
    <text evidence="1">Binds 1 Mn(2+) ion per subunit.</text>
</comment>
<comment type="pathway">
    <text evidence="1">Isoprenoid biosynthesis; dimethylallyl diphosphate biosynthesis; dimethylallyl diphosphate from isopentenyl diphosphate: step 1/1.</text>
</comment>
<comment type="subcellular location">
    <subcellularLocation>
        <location evidence="1">Cytoplasm</location>
    </subcellularLocation>
</comment>
<comment type="similarity">
    <text evidence="1">Belongs to the IPP isomerase type 1 family.</text>
</comment>
<comment type="caution">
    <text evidence="2">Could lack activity as the potential active site Cys residue in position 78 is replaced by an Ala.</text>
</comment>
<accession>Q5UX45</accession>